<comment type="function">
    <text evidence="1">May play a role in the regulation of centrosome and Golgi apparatus positioning.</text>
</comment>
<comment type="subcellular location">
    <subcellularLocation>
        <location evidence="1">Cytoplasm</location>
        <location evidence="1">Cytoskeleton</location>
        <location evidence="1">Microtubule organizing center</location>
        <location evidence="1">Centrosome</location>
    </subcellularLocation>
    <subcellularLocation>
        <location evidence="1">Cytoplasm</location>
        <location evidence="1">Cytoskeleton</location>
        <location evidence="1">Spindle pole</location>
    </subcellularLocation>
</comment>
<comment type="similarity">
    <text evidence="3">Belongs to the TBCC family.</text>
</comment>
<organism>
    <name type="scientific">Gallus gallus</name>
    <name type="common">Chicken</name>
    <dbReference type="NCBI Taxonomy" id="9031"/>
    <lineage>
        <taxon>Eukaryota</taxon>
        <taxon>Metazoa</taxon>
        <taxon>Chordata</taxon>
        <taxon>Craniata</taxon>
        <taxon>Vertebrata</taxon>
        <taxon>Euteleostomi</taxon>
        <taxon>Archelosauria</taxon>
        <taxon>Archosauria</taxon>
        <taxon>Dinosauria</taxon>
        <taxon>Saurischia</taxon>
        <taxon>Theropoda</taxon>
        <taxon>Coelurosauria</taxon>
        <taxon>Aves</taxon>
        <taxon>Neognathae</taxon>
        <taxon>Galloanserae</taxon>
        <taxon>Galliformes</taxon>
        <taxon>Phasianidae</taxon>
        <taxon>Phasianinae</taxon>
        <taxon>Gallus</taxon>
    </lineage>
</organism>
<evidence type="ECO:0000250" key="1"/>
<evidence type="ECO:0000255" key="2">
    <source>
        <dbReference type="PROSITE-ProRule" id="PRU00659"/>
    </source>
</evidence>
<evidence type="ECO:0000305" key="3"/>
<keyword id="KW-0963">Cytoplasm</keyword>
<keyword id="KW-0206">Cytoskeleton</keyword>
<keyword id="KW-1185">Reference proteome</keyword>
<proteinExistence type="evidence at transcript level"/>
<reference key="1">
    <citation type="journal article" date="2005" name="Genome Biol.">
        <title>Full-length cDNAs from chicken bursal lymphocytes to facilitate gene function analysis.</title>
        <authorList>
            <person name="Caldwell R.B."/>
            <person name="Kierzek A.M."/>
            <person name="Arakawa H."/>
            <person name="Bezzubov Y."/>
            <person name="Zaim J."/>
            <person name="Fiedler P."/>
            <person name="Kutter S."/>
            <person name="Blagodatski A."/>
            <person name="Kostovska D."/>
            <person name="Koter M."/>
            <person name="Plachy J."/>
            <person name="Carninci P."/>
            <person name="Hayashizaki Y."/>
            <person name="Buerstedde J.-M."/>
        </authorList>
    </citation>
    <scope>NUCLEOTIDE SEQUENCE [LARGE SCALE MRNA]</scope>
    <source>
        <strain>CB</strain>
        <tissue>Bursa of Fabricius</tissue>
    </source>
</reference>
<protein>
    <recommendedName>
        <fullName>TBCC domain-containing protein 1</fullName>
    </recommendedName>
</protein>
<accession>Q5ZKT1</accession>
<dbReference type="EMBL" id="AJ720003">
    <property type="protein sequence ID" value="CAG31662.1"/>
    <property type="molecule type" value="mRNA"/>
</dbReference>
<dbReference type="RefSeq" id="NP_001006545.1">
    <property type="nucleotide sequence ID" value="NM_001006545.1"/>
</dbReference>
<dbReference type="SMR" id="Q5ZKT1"/>
<dbReference type="FunCoup" id="Q5ZKT1">
    <property type="interactions" value="1428"/>
</dbReference>
<dbReference type="STRING" id="9031.ENSGALP00000010585"/>
<dbReference type="PaxDb" id="9031-ENSGALP00000010585"/>
<dbReference type="GeneID" id="424869"/>
<dbReference type="KEGG" id="gga:424869"/>
<dbReference type="CTD" id="55171"/>
<dbReference type="VEuPathDB" id="HostDB:geneid_424869"/>
<dbReference type="eggNOG" id="KOG4416">
    <property type="taxonomic scope" value="Eukaryota"/>
</dbReference>
<dbReference type="HOGENOM" id="CLU_016712_1_1_1"/>
<dbReference type="InParanoid" id="Q5ZKT1"/>
<dbReference type="OMA" id="VPNAWDQ"/>
<dbReference type="OrthoDB" id="427777at2759"/>
<dbReference type="PhylomeDB" id="Q5ZKT1"/>
<dbReference type="TreeFam" id="TF329418"/>
<dbReference type="PRO" id="PR:Q5ZKT1"/>
<dbReference type="Proteomes" id="UP000000539">
    <property type="component" value="Chromosome 9"/>
</dbReference>
<dbReference type="Bgee" id="ENSGALG00000006566">
    <property type="expression patterns" value="Expressed in spermatid and 12 other cell types or tissues"/>
</dbReference>
<dbReference type="GO" id="GO:0005737">
    <property type="term" value="C:cytoplasm"/>
    <property type="evidence" value="ECO:0007669"/>
    <property type="project" value="UniProtKB-KW"/>
</dbReference>
<dbReference type="GO" id="GO:0031616">
    <property type="term" value="C:spindle pole centrosome"/>
    <property type="evidence" value="ECO:0000318"/>
    <property type="project" value="GO_Central"/>
</dbReference>
<dbReference type="GO" id="GO:0051661">
    <property type="term" value="P:maintenance of centrosome location"/>
    <property type="evidence" value="ECO:0000318"/>
    <property type="project" value="GO_Central"/>
</dbReference>
<dbReference type="GO" id="GO:0051684">
    <property type="term" value="P:maintenance of Golgi location"/>
    <property type="evidence" value="ECO:0000318"/>
    <property type="project" value="GO_Central"/>
</dbReference>
<dbReference type="Gene3D" id="2.160.20.70">
    <property type="match status" value="1"/>
</dbReference>
<dbReference type="InterPro" id="IPR017901">
    <property type="entry name" value="C-CAP_CF_C-like"/>
</dbReference>
<dbReference type="InterPro" id="IPR016098">
    <property type="entry name" value="CAP/MinC_C"/>
</dbReference>
<dbReference type="InterPro" id="IPR036223">
    <property type="entry name" value="CAP_C_sf"/>
</dbReference>
<dbReference type="InterPro" id="IPR006599">
    <property type="entry name" value="CARP_motif"/>
</dbReference>
<dbReference type="InterPro" id="IPR039589">
    <property type="entry name" value="TBCC1"/>
</dbReference>
<dbReference type="InterPro" id="IPR012945">
    <property type="entry name" value="Tubulin-bd_cofactor_C_dom"/>
</dbReference>
<dbReference type="PANTHER" id="PTHR16052">
    <property type="entry name" value="TBCC DOMAIN-CONTAINING PROTEIN 1"/>
    <property type="match status" value="1"/>
</dbReference>
<dbReference type="PANTHER" id="PTHR16052:SF0">
    <property type="entry name" value="TBCC DOMAIN-CONTAINING PROTEIN 1"/>
    <property type="match status" value="1"/>
</dbReference>
<dbReference type="Pfam" id="PF07986">
    <property type="entry name" value="TBCC"/>
    <property type="match status" value="1"/>
</dbReference>
<dbReference type="SMART" id="SM00673">
    <property type="entry name" value="CARP"/>
    <property type="match status" value="2"/>
</dbReference>
<dbReference type="SUPFAM" id="SSF69340">
    <property type="entry name" value="C-terminal domain of adenylylcyclase associated protein"/>
    <property type="match status" value="1"/>
</dbReference>
<dbReference type="PROSITE" id="PS51329">
    <property type="entry name" value="C_CAP_COFACTOR_C"/>
    <property type="match status" value="1"/>
</dbReference>
<sequence>MAAAVSLWPRTEPLLLGALPVPPPARLGPHYLRKMAAYARARAAEGCYPRLSWPRWRHIACGKLQLGRGLAWLYFERFHDLLPPPDPPRRLQRAEAEAACGSAEELERERGKLSVDTLRFLLFLYLQQLNKASLRTSLIGEEWPSHRARAAGLPGRAAGQSKNWNDQDHLAFLLTHLSDMLELLLEPEQLGASSHATHNSLVSYEAVCALSFLIEGTVNNSRTIHPLHELALWQPCHGQNGYSKISKTFSFPKLENWLRSCLIINPFGMTACLRSGKKLAWAQQVEGTTRRAKIACNTRVVPEVSPMVIMSQVYKQTLAKSSDTLVGAHVRIHRCNESFIYLLSPLCSVTIEKCRNSTFVLGPVEASVHVHSCDNIKVITVCHCLSLSSTTGCTFHILTPTQPLILAGNQAISFAPFHTHYPMLEDHMAQVGLATVPNYWDSPMMVCKEGSDASVFRLLSPLDFYTFVIPFEMEGDTTETPGGLPHAYQKALNQREQKVQIWQKMVKEACLTKDQRKQFQMLVESKFYEWLIQTGNRQQLDSLVPPAVGSKQAAG</sequence>
<gene>
    <name type="primary">TBCCD1</name>
    <name type="ORF">RCJMB04_9e22</name>
</gene>
<feature type="chain" id="PRO_0000304947" description="TBCC domain-containing protein 1">
    <location>
        <begin position="1"/>
        <end position="555"/>
    </location>
</feature>
<feature type="domain" description="C-CAP/cofactor C-like" evidence="2">
    <location>
        <begin position="302"/>
        <end position="433"/>
    </location>
</feature>
<name>TBCC1_CHICK</name>